<feature type="chain" id="PRO_0000099766" description="Branched-chain amino acid permease BrnQ">
    <location>
        <begin position="1"/>
        <end position="439"/>
    </location>
</feature>
<feature type="topological domain" description="Cytoplasmic" evidence="2">
    <location>
        <begin position="1"/>
        <end position="9"/>
    </location>
</feature>
<feature type="transmembrane region" description="Helical" evidence="2">
    <location>
        <begin position="10"/>
        <end position="30"/>
    </location>
</feature>
<feature type="topological domain" description="Periplasmic" evidence="2">
    <location>
        <begin position="31"/>
        <end position="45"/>
    </location>
</feature>
<feature type="transmembrane region" description="Helical" evidence="2">
    <location>
        <begin position="46"/>
        <end position="66"/>
    </location>
</feature>
<feature type="topological domain" description="Cytoplasmic" evidence="2">
    <location>
        <begin position="67"/>
        <end position="79"/>
    </location>
</feature>
<feature type="transmembrane region" description="Helical" evidence="2">
    <location>
        <begin position="80"/>
        <end position="100"/>
    </location>
</feature>
<feature type="topological domain" description="Periplasmic" evidence="2">
    <location>
        <begin position="101"/>
        <end position="118"/>
    </location>
</feature>
<feature type="transmembrane region" description="Helical" evidence="2">
    <location>
        <begin position="119"/>
        <end position="139"/>
    </location>
</feature>
<feature type="topological domain" description="Cytoplasmic" evidence="2">
    <location>
        <begin position="140"/>
        <end position="149"/>
    </location>
</feature>
<feature type="transmembrane region" description="Helical" evidence="2">
    <location>
        <begin position="150"/>
        <end position="170"/>
    </location>
</feature>
<feature type="topological domain" description="Periplasmic" evidence="2">
    <location>
        <begin position="171"/>
        <end position="189"/>
    </location>
</feature>
<feature type="transmembrane region" description="Helical" evidence="2">
    <location>
        <begin position="190"/>
        <end position="210"/>
    </location>
</feature>
<feature type="topological domain" description="Cytoplasmic" evidence="2">
    <location>
        <begin position="211"/>
        <end position="226"/>
    </location>
</feature>
<feature type="transmembrane region" description="Helical" evidence="2">
    <location>
        <begin position="227"/>
        <end position="247"/>
    </location>
</feature>
<feature type="topological domain" description="Periplasmic" evidence="2">
    <location>
        <begin position="248"/>
        <end position="277"/>
    </location>
</feature>
<feature type="transmembrane region" description="Helical" evidence="2">
    <location>
        <begin position="278"/>
        <end position="298"/>
    </location>
</feature>
<feature type="topological domain" description="Cytoplasmic" evidence="2">
    <location>
        <begin position="299"/>
        <end position="316"/>
    </location>
</feature>
<feature type="transmembrane region" description="Helical" evidence="2">
    <location>
        <begin position="317"/>
        <end position="337"/>
    </location>
</feature>
<feature type="topological domain" description="Periplasmic" evidence="2">
    <location>
        <position position="338"/>
    </location>
</feature>
<feature type="transmembrane region" description="Helical" evidence="2">
    <location>
        <begin position="339"/>
        <end position="359"/>
    </location>
</feature>
<feature type="topological domain" description="Cytoplasmic" evidence="2">
    <location>
        <begin position="360"/>
        <end position="369"/>
    </location>
</feature>
<feature type="transmembrane region" description="Helical" evidence="2">
    <location>
        <begin position="370"/>
        <end position="390"/>
    </location>
</feature>
<feature type="topological domain" description="Periplasmic" evidence="2">
    <location>
        <begin position="391"/>
        <end position="404"/>
    </location>
</feature>
<feature type="transmembrane region" description="Helical" evidence="2">
    <location>
        <begin position="405"/>
        <end position="425"/>
    </location>
</feature>
<feature type="topological domain" description="Cytoplasmic" evidence="1">
    <location>
        <begin position="426"/>
        <end position="439"/>
    </location>
</feature>
<comment type="function">
    <text evidence="1">Liv-II branched chain amino acid transport system, which transports leucine, valine and isoleucine.</text>
</comment>
<comment type="subcellular location">
    <subcellularLocation>
        <location evidence="1">Cell inner membrane</location>
        <topology evidence="2">Multi-pass membrane protein</topology>
    </subcellularLocation>
</comment>
<comment type="similarity">
    <text evidence="3">Belongs to the branched chain amino acid transporter family.</text>
</comment>
<proteinExistence type="inferred from homology"/>
<accession>P0ADA0</accession>
<accession>P37011</accession>
<accession>P77112</accession>
<accession>P77492</accession>
<dbReference type="EMBL" id="AE005174">
    <property type="protein sequence ID" value="AAG54747.1"/>
    <property type="molecule type" value="Genomic_DNA"/>
</dbReference>
<dbReference type="EMBL" id="BA000007">
    <property type="protein sequence ID" value="BAB33874.1"/>
    <property type="molecule type" value="Genomic_DNA"/>
</dbReference>
<dbReference type="PIR" id="C90685">
    <property type="entry name" value="C90685"/>
</dbReference>
<dbReference type="PIR" id="G85535">
    <property type="entry name" value="G85535"/>
</dbReference>
<dbReference type="RefSeq" id="NP_308478.1">
    <property type="nucleotide sequence ID" value="NC_002695.1"/>
</dbReference>
<dbReference type="RefSeq" id="WP_000149639.1">
    <property type="nucleotide sequence ID" value="NZ_VOAI01000005.1"/>
</dbReference>
<dbReference type="STRING" id="155864.Z0499"/>
<dbReference type="GeneID" id="914553"/>
<dbReference type="GeneID" id="93777059"/>
<dbReference type="KEGG" id="ece:Z0499"/>
<dbReference type="KEGG" id="ecs:ECs_0451"/>
<dbReference type="PATRIC" id="fig|386585.9.peg.551"/>
<dbReference type="eggNOG" id="COG1114">
    <property type="taxonomic scope" value="Bacteria"/>
</dbReference>
<dbReference type="HOGENOM" id="CLU_036807_0_0_6"/>
<dbReference type="OMA" id="IWPAGPI"/>
<dbReference type="Proteomes" id="UP000000558">
    <property type="component" value="Chromosome"/>
</dbReference>
<dbReference type="Proteomes" id="UP000002519">
    <property type="component" value="Chromosome"/>
</dbReference>
<dbReference type="GO" id="GO:0005886">
    <property type="term" value="C:plasma membrane"/>
    <property type="evidence" value="ECO:0007669"/>
    <property type="project" value="UniProtKB-SubCell"/>
</dbReference>
<dbReference type="GO" id="GO:0015188">
    <property type="term" value="F:L-isoleucine transmembrane transporter activity"/>
    <property type="evidence" value="ECO:0007669"/>
    <property type="project" value="TreeGrafter"/>
</dbReference>
<dbReference type="GO" id="GO:0015190">
    <property type="term" value="F:L-leucine transmembrane transporter activity"/>
    <property type="evidence" value="ECO:0007669"/>
    <property type="project" value="TreeGrafter"/>
</dbReference>
<dbReference type="GO" id="GO:0005304">
    <property type="term" value="F:L-valine transmembrane transporter activity"/>
    <property type="evidence" value="ECO:0007669"/>
    <property type="project" value="TreeGrafter"/>
</dbReference>
<dbReference type="GO" id="GO:0015818">
    <property type="term" value="P:isoleucine transport"/>
    <property type="evidence" value="ECO:0007669"/>
    <property type="project" value="TreeGrafter"/>
</dbReference>
<dbReference type="GO" id="GO:0015820">
    <property type="term" value="P:L-leucine transport"/>
    <property type="evidence" value="ECO:0007669"/>
    <property type="project" value="TreeGrafter"/>
</dbReference>
<dbReference type="InterPro" id="IPR004685">
    <property type="entry name" value="Brnchd-chn_aa_trnsp_Livcs"/>
</dbReference>
<dbReference type="NCBIfam" id="TIGR00796">
    <property type="entry name" value="livcs"/>
    <property type="match status" value="1"/>
</dbReference>
<dbReference type="NCBIfam" id="NF011962">
    <property type="entry name" value="PRK15433.1"/>
    <property type="match status" value="1"/>
</dbReference>
<dbReference type="PANTHER" id="PTHR30588:SF0">
    <property type="entry name" value="BRANCHED-CHAIN AMINO ACID PERMEASE BRNQ"/>
    <property type="match status" value="1"/>
</dbReference>
<dbReference type="PANTHER" id="PTHR30588">
    <property type="entry name" value="BRANCHED-CHAIN AMINO ACID TRANSPORT SYSTEM 2 CARRIER PROTEIN"/>
    <property type="match status" value="1"/>
</dbReference>
<dbReference type="Pfam" id="PF05525">
    <property type="entry name" value="Branch_AA_trans"/>
    <property type="match status" value="1"/>
</dbReference>
<evidence type="ECO:0000250" key="1">
    <source>
        <dbReference type="UniProtKB" id="P0AD99"/>
    </source>
</evidence>
<evidence type="ECO:0000255" key="2"/>
<evidence type="ECO:0000305" key="3"/>
<gene>
    <name type="primary">brnQ</name>
    <name type="ordered locus">Z0499</name>
    <name type="ordered locus">ECs0451</name>
</gene>
<protein>
    <recommendedName>
        <fullName evidence="3">Branched-chain amino acid permease BrnQ</fullName>
        <shortName evidence="3">BCAA permease</shortName>
    </recommendedName>
    <alternativeName>
        <fullName>Branched-chain amino acid transport system 2 carrier protein</fullName>
    </alternativeName>
    <alternativeName>
        <fullName>LIV-II</fullName>
    </alternativeName>
</protein>
<name>BRNQ_ECO57</name>
<reference key="1">
    <citation type="journal article" date="2001" name="Nature">
        <title>Genome sequence of enterohaemorrhagic Escherichia coli O157:H7.</title>
        <authorList>
            <person name="Perna N.T."/>
            <person name="Plunkett G. III"/>
            <person name="Burland V."/>
            <person name="Mau B."/>
            <person name="Glasner J.D."/>
            <person name="Rose D.J."/>
            <person name="Mayhew G.F."/>
            <person name="Evans P.S."/>
            <person name="Gregor J."/>
            <person name="Kirkpatrick H.A."/>
            <person name="Posfai G."/>
            <person name="Hackett J."/>
            <person name="Klink S."/>
            <person name="Boutin A."/>
            <person name="Shao Y."/>
            <person name="Miller L."/>
            <person name="Grotbeck E.J."/>
            <person name="Davis N.W."/>
            <person name="Lim A."/>
            <person name="Dimalanta E.T."/>
            <person name="Potamousis K."/>
            <person name="Apodaca J."/>
            <person name="Anantharaman T.S."/>
            <person name="Lin J."/>
            <person name="Yen G."/>
            <person name="Schwartz D.C."/>
            <person name="Welch R.A."/>
            <person name="Blattner F.R."/>
        </authorList>
    </citation>
    <scope>NUCLEOTIDE SEQUENCE [LARGE SCALE GENOMIC DNA]</scope>
    <source>
        <strain>O157:H7 / EDL933 / ATCC 700927 / EHEC</strain>
    </source>
</reference>
<reference key="2">
    <citation type="journal article" date="2001" name="DNA Res.">
        <title>Complete genome sequence of enterohemorrhagic Escherichia coli O157:H7 and genomic comparison with a laboratory strain K-12.</title>
        <authorList>
            <person name="Hayashi T."/>
            <person name="Makino K."/>
            <person name="Ohnishi M."/>
            <person name="Kurokawa K."/>
            <person name="Ishii K."/>
            <person name="Yokoyama K."/>
            <person name="Han C.-G."/>
            <person name="Ohtsubo E."/>
            <person name="Nakayama K."/>
            <person name="Murata T."/>
            <person name="Tanaka M."/>
            <person name="Tobe T."/>
            <person name="Iida T."/>
            <person name="Takami H."/>
            <person name="Honda T."/>
            <person name="Sasakawa C."/>
            <person name="Ogasawara N."/>
            <person name="Yasunaga T."/>
            <person name="Kuhara S."/>
            <person name="Shiba T."/>
            <person name="Hattori M."/>
            <person name="Shinagawa H."/>
        </authorList>
    </citation>
    <scope>NUCLEOTIDE SEQUENCE [LARGE SCALE GENOMIC DNA]</scope>
    <source>
        <strain>O157:H7 / Sakai / RIMD 0509952 / EHEC</strain>
    </source>
</reference>
<sequence length="439" mass="46209">MTHQLRSRDIIALGFMTFALFVGAGNIIFPPMVGLQAGEHVWTAAFGFLITAVGLPVLTVVALAKVGGGVDSLSTPIGKVAGVLLATVCYLAVGPLFATPRTATVSFEVGIAPLTGDSALPLFIYSLVYFAIVILVSLYPGKLLDTVGNFLAPLKIIALVILSVAAIVWPAGSISTATEAYQNAAFSNGFVNGYLTMDTLGAMVFGIVIVNAARSRGVTEARLLTRYTVWAGLMAGVGLTLLYLALFRLGSDSASLVDQSANGAAILHAYVQHTFGGGGSFLLAALIFIACLVTAVGLTCACAEFFAQYVPLSYRTLVFILGGFSMVVSNLGLSQLIQISVPVLTAIYPPCIALVVLSFTRSWWHNSSRVIAPPMFISLLFGILDGIKASAFSDILPSWAQRLPLAEQGLAWLMPTVVMVVLAIIWDRAAGRQVTSSAH</sequence>
<keyword id="KW-0029">Amino-acid transport</keyword>
<keyword id="KW-0997">Cell inner membrane</keyword>
<keyword id="KW-1003">Cell membrane</keyword>
<keyword id="KW-0472">Membrane</keyword>
<keyword id="KW-1185">Reference proteome</keyword>
<keyword id="KW-0812">Transmembrane</keyword>
<keyword id="KW-1133">Transmembrane helix</keyword>
<keyword id="KW-0813">Transport</keyword>
<organism>
    <name type="scientific">Escherichia coli O157:H7</name>
    <dbReference type="NCBI Taxonomy" id="83334"/>
    <lineage>
        <taxon>Bacteria</taxon>
        <taxon>Pseudomonadati</taxon>
        <taxon>Pseudomonadota</taxon>
        <taxon>Gammaproteobacteria</taxon>
        <taxon>Enterobacterales</taxon>
        <taxon>Enterobacteriaceae</taxon>
        <taxon>Escherichia</taxon>
    </lineage>
</organism>